<keyword id="KW-0028">Amino-acid biosynthesis</keyword>
<keyword id="KW-0057">Aromatic amino acid biosynthesis</keyword>
<keyword id="KW-0067">ATP-binding</keyword>
<keyword id="KW-0963">Cytoplasm</keyword>
<keyword id="KW-0418">Kinase</keyword>
<keyword id="KW-0460">Magnesium</keyword>
<keyword id="KW-0479">Metal-binding</keyword>
<keyword id="KW-0547">Nucleotide-binding</keyword>
<keyword id="KW-1185">Reference proteome</keyword>
<keyword id="KW-0808">Transferase</keyword>
<organism>
    <name type="scientific">Nostoc punctiforme (strain ATCC 29133 / PCC 73102)</name>
    <dbReference type="NCBI Taxonomy" id="63737"/>
    <lineage>
        <taxon>Bacteria</taxon>
        <taxon>Bacillati</taxon>
        <taxon>Cyanobacteriota</taxon>
        <taxon>Cyanophyceae</taxon>
        <taxon>Nostocales</taxon>
        <taxon>Nostocaceae</taxon>
        <taxon>Nostoc</taxon>
    </lineage>
</organism>
<feature type="chain" id="PRO_1000094400" description="Shikimate kinase">
    <location>
        <begin position="1"/>
        <end position="181"/>
    </location>
</feature>
<feature type="binding site" evidence="1">
    <location>
        <begin position="17"/>
        <end position="22"/>
    </location>
    <ligand>
        <name>ATP</name>
        <dbReference type="ChEBI" id="CHEBI:30616"/>
    </ligand>
</feature>
<feature type="binding site" evidence="1">
    <location>
        <position position="21"/>
    </location>
    <ligand>
        <name>Mg(2+)</name>
        <dbReference type="ChEBI" id="CHEBI:18420"/>
    </ligand>
</feature>
<feature type="binding site" evidence="1">
    <location>
        <position position="39"/>
    </location>
    <ligand>
        <name>substrate</name>
    </ligand>
</feature>
<feature type="binding site" evidence="1">
    <location>
        <position position="63"/>
    </location>
    <ligand>
        <name>substrate</name>
    </ligand>
</feature>
<feature type="binding site" evidence="1">
    <location>
        <position position="85"/>
    </location>
    <ligand>
        <name>substrate</name>
    </ligand>
</feature>
<feature type="binding site" evidence="1">
    <location>
        <position position="122"/>
    </location>
    <ligand>
        <name>ATP</name>
        <dbReference type="ChEBI" id="CHEBI:30616"/>
    </ligand>
</feature>
<feature type="binding site" evidence="1">
    <location>
        <position position="141"/>
    </location>
    <ligand>
        <name>substrate</name>
    </ligand>
</feature>
<dbReference type="EC" id="2.7.1.71" evidence="1"/>
<dbReference type="EMBL" id="CP001037">
    <property type="protein sequence ID" value="ACC84570.1"/>
    <property type="molecule type" value="Genomic_DNA"/>
</dbReference>
<dbReference type="RefSeq" id="WP_012412509.1">
    <property type="nucleotide sequence ID" value="NC_010628.1"/>
</dbReference>
<dbReference type="SMR" id="B2IX35"/>
<dbReference type="STRING" id="63737.Npun_R6293"/>
<dbReference type="EnsemblBacteria" id="ACC84570">
    <property type="protein sequence ID" value="ACC84570"/>
    <property type="gene ID" value="Npun_R6293"/>
</dbReference>
<dbReference type="KEGG" id="npu:Npun_R6293"/>
<dbReference type="eggNOG" id="COG0703">
    <property type="taxonomic scope" value="Bacteria"/>
</dbReference>
<dbReference type="HOGENOM" id="CLU_057607_2_3_3"/>
<dbReference type="OrthoDB" id="9800332at2"/>
<dbReference type="PhylomeDB" id="B2IX35"/>
<dbReference type="UniPathway" id="UPA00053">
    <property type="reaction ID" value="UER00088"/>
</dbReference>
<dbReference type="Proteomes" id="UP000001191">
    <property type="component" value="Chromosome"/>
</dbReference>
<dbReference type="GO" id="GO:0005829">
    <property type="term" value="C:cytosol"/>
    <property type="evidence" value="ECO:0007669"/>
    <property type="project" value="TreeGrafter"/>
</dbReference>
<dbReference type="GO" id="GO:0005524">
    <property type="term" value="F:ATP binding"/>
    <property type="evidence" value="ECO:0007669"/>
    <property type="project" value="UniProtKB-UniRule"/>
</dbReference>
<dbReference type="GO" id="GO:0000287">
    <property type="term" value="F:magnesium ion binding"/>
    <property type="evidence" value="ECO:0007669"/>
    <property type="project" value="UniProtKB-UniRule"/>
</dbReference>
<dbReference type="GO" id="GO:0004765">
    <property type="term" value="F:shikimate kinase activity"/>
    <property type="evidence" value="ECO:0007669"/>
    <property type="project" value="UniProtKB-UniRule"/>
</dbReference>
<dbReference type="GO" id="GO:0008652">
    <property type="term" value="P:amino acid biosynthetic process"/>
    <property type="evidence" value="ECO:0007669"/>
    <property type="project" value="UniProtKB-KW"/>
</dbReference>
<dbReference type="GO" id="GO:0009073">
    <property type="term" value="P:aromatic amino acid family biosynthetic process"/>
    <property type="evidence" value="ECO:0007669"/>
    <property type="project" value="UniProtKB-KW"/>
</dbReference>
<dbReference type="GO" id="GO:0009423">
    <property type="term" value="P:chorismate biosynthetic process"/>
    <property type="evidence" value="ECO:0007669"/>
    <property type="project" value="UniProtKB-UniRule"/>
</dbReference>
<dbReference type="CDD" id="cd00464">
    <property type="entry name" value="SK"/>
    <property type="match status" value="1"/>
</dbReference>
<dbReference type="Gene3D" id="3.40.50.300">
    <property type="entry name" value="P-loop containing nucleotide triphosphate hydrolases"/>
    <property type="match status" value="1"/>
</dbReference>
<dbReference type="HAMAP" id="MF_00109">
    <property type="entry name" value="Shikimate_kinase"/>
    <property type="match status" value="1"/>
</dbReference>
<dbReference type="InterPro" id="IPR027417">
    <property type="entry name" value="P-loop_NTPase"/>
</dbReference>
<dbReference type="InterPro" id="IPR031322">
    <property type="entry name" value="Shikimate/glucono_kinase"/>
</dbReference>
<dbReference type="InterPro" id="IPR000623">
    <property type="entry name" value="Shikimate_kinase/TSH1"/>
</dbReference>
<dbReference type="PANTHER" id="PTHR21087">
    <property type="entry name" value="SHIKIMATE KINASE"/>
    <property type="match status" value="1"/>
</dbReference>
<dbReference type="PANTHER" id="PTHR21087:SF16">
    <property type="entry name" value="SHIKIMATE KINASE 1, CHLOROPLASTIC"/>
    <property type="match status" value="1"/>
</dbReference>
<dbReference type="Pfam" id="PF01202">
    <property type="entry name" value="SKI"/>
    <property type="match status" value="1"/>
</dbReference>
<dbReference type="PRINTS" id="PR01100">
    <property type="entry name" value="SHIKIMTKNASE"/>
</dbReference>
<dbReference type="SUPFAM" id="SSF52540">
    <property type="entry name" value="P-loop containing nucleoside triphosphate hydrolases"/>
    <property type="match status" value="1"/>
</dbReference>
<gene>
    <name evidence="1" type="primary">aroK</name>
    <name type="ordered locus">Npun_R6293</name>
</gene>
<name>AROK_NOSP7</name>
<accession>B2IX35</accession>
<protein>
    <recommendedName>
        <fullName evidence="1">Shikimate kinase</fullName>
        <shortName evidence="1">SK</shortName>
        <ecNumber evidence="1">2.7.1.71</ecNumber>
    </recommendedName>
</protein>
<evidence type="ECO:0000255" key="1">
    <source>
        <dbReference type="HAMAP-Rule" id="MF_00109"/>
    </source>
</evidence>
<reference key="1">
    <citation type="journal article" date="2013" name="Plant Physiol.">
        <title>A Nostoc punctiforme Sugar Transporter Necessary to Establish a Cyanobacterium-Plant Symbiosis.</title>
        <authorList>
            <person name="Ekman M."/>
            <person name="Picossi S."/>
            <person name="Campbell E.L."/>
            <person name="Meeks J.C."/>
            <person name="Flores E."/>
        </authorList>
    </citation>
    <scope>NUCLEOTIDE SEQUENCE [LARGE SCALE GENOMIC DNA]</scope>
    <source>
        <strain>ATCC 29133 / PCC 73102</strain>
    </source>
</reference>
<sequence>MSSLLQGVNLYLIGMMGVGKTTVGPLLAKHLGYGFLDLDGVIAKATDKSINQLFAEEGEAGFRQIESDVLSQVCAFTKLTIATGGGIVLRRENWGYLHHGLIVWLDVPVELIYRRLAEDTTRPLLQDADLKGKLRSLLEQRTPLYSQADLHITVQEGETPEDIANRIIEVIPNVLKPQASH</sequence>
<proteinExistence type="inferred from homology"/>
<comment type="function">
    <text evidence="1">Catalyzes the specific phosphorylation of the 3-hydroxyl group of shikimic acid using ATP as a cosubstrate.</text>
</comment>
<comment type="catalytic activity">
    <reaction evidence="1">
        <text>shikimate + ATP = 3-phosphoshikimate + ADP + H(+)</text>
        <dbReference type="Rhea" id="RHEA:13121"/>
        <dbReference type="ChEBI" id="CHEBI:15378"/>
        <dbReference type="ChEBI" id="CHEBI:30616"/>
        <dbReference type="ChEBI" id="CHEBI:36208"/>
        <dbReference type="ChEBI" id="CHEBI:145989"/>
        <dbReference type="ChEBI" id="CHEBI:456216"/>
        <dbReference type="EC" id="2.7.1.71"/>
    </reaction>
</comment>
<comment type="cofactor">
    <cofactor evidence="1">
        <name>Mg(2+)</name>
        <dbReference type="ChEBI" id="CHEBI:18420"/>
    </cofactor>
    <text evidence="1">Binds 1 Mg(2+) ion per subunit.</text>
</comment>
<comment type="pathway">
    <text evidence="1">Metabolic intermediate biosynthesis; chorismate biosynthesis; chorismate from D-erythrose 4-phosphate and phosphoenolpyruvate: step 5/7.</text>
</comment>
<comment type="subunit">
    <text evidence="1">Monomer.</text>
</comment>
<comment type="subcellular location">
    <subcellularLocation>
        <location evidence="1">Cytoplasm</location>
    </subcellularLocation>
</comment>
<comment type="similarity">
    <text evidence="1">Belongs to the shikimate kinase family.</text>
</comment>